<dbReference type="EMBL" id="AY100688">
    <property type="protein sequence ID" value="AAM48568.1"/>
    <property type="molecule type" value="mRNA"/>
</dbReference>
<dbReference type="RefSeq" id="NP_001231051.1">
    <property type="nucleotide sequence ID" value="NM_001244122.1"/>
</dbReference>
<dbReference type="SMR" id="Q8K3H7"/>
<dbReference type="IntAct" id="Q8K3H7">
    <property type="interactions" value="1"/>
</dbReference>
<dbReference type="PaxDb" id="10029-NP_001231051.1"/>
<dbReference type="GeneID" id="100689096"/>
<dbReference type="KEGG" id="cge:100689096"/>
<dbReference type="CTD" id="811"/>
<dbReference type="eggNOG" id="KOG0674">
    <property type="taxonomic scope" value="Eukaryota"/>
</dbReference>
<dbReference type="OrthoDB" id="1938156at2759"/>
<dbReference type="Proteomes" id="UP000694386">
    <property type="component" value="Unplaced"/>
</dbReference>
<dbReference type="Proteomes" id="UP001108280">
    <property type="component" value="Chromosome 3"/>
</dbReference>
<dbReference type="GO" id="GO:0009986">
    <property type="term" value="C:cell surface"/>
    <property type="evidence" value="ECO:0007669"/>
    <property type="project" value="UniProtKB-SubCell"/>
</dbReference>
<dbReference type="GO" id="GO:0060473">
    <property type="term" value="C:cortical granule"/>
    <property type="evidence" value="ECO:0000314"/>
    <property type="project" value="UniProtKB"/>
</dbReference>
<dbReference type="GO" id="GO:0044194">
    <property type="term" value="C:cytolytic granule"/>
    <property type="evidence" value="ECO:0007669"/>
    <property type="project" value="UniProtKB-SubCell"/>
</dbReference>
<dbReference type="GO" id="GO:0005829">
    <property type="term" value="C:cytosol"/>
    <property type="evidence" value="ECO:0007669"/>
    <property type="project" value="UniProtKB-SubCell"/>
</dbReference>
<dbReference type="GO" id="GO:0005789">
    <property type="term" value="C:endoplasmic reticulum membrane"/>
    <property type="evidence" value="ECO:0007669"/>
    <property type="project" value="TreeGrafter"/>
</dbReference>
<dbReference type="GO" id="GO:0005576">
    <property type="term" value="C:extracellular region"/>
    <property type="evidence" value="ECO:0007669"/>
    <property type="project" value="UniProtKB-KW"/>
</dbReference>
<dbReference type="GO" id="GO:0030496">
    <property type="term" value="C:midbody"/>
    <property type="evidence" value="ECO:0000314"/>
    <property type="project" value="UniProtKB"/>
</dbReference>
<dbReference type="GO" id="GO:0033018">
    <property type="term" value="C:sarcoplasmic reticulum lumen"/>
    <property type="evidence" value="ECO:0007669"/>
    <property type="project" value="UniProtKB-SubCell"/>
</dbReference>
<dbReference type="GO" id="GO:0005509">
    <property type="term" value="F:calcium ion binding"/>
    <property type="evidence" value="ECO:0000250"/>
    <property type="project" value="UniProtKB"/>
</dbReference>
<dbReference type="GO" id="GO:0030246">
    <property type="term" value="F:carbohydrate binding"/>
    <property type="evidence" value="ECO:0007669"/>
    <property type="project" value="UniProtKB-KW"/>
</dbReference>
<dbReference type="GO" id="GO:0051082">
    <property type="term" value="F:unfolded protein binding"/>
    <property type="evidence" value="ECO:0007669"/>
    <property type="project" value="InterPro"/>
</dbReference>
<dbReference type="GO" id="GO:0036503">
    <property type="term" value="P:ERAD pathway"/>
    <property type="evidence" value="ECO:0007669"/>
    <property type="project" value="TreeGrafter"/>
</dbReference>
<dbReference type="GO" id="GO:0006457">
    <property type="term" value="P:protein folding"/>
    <property type="evidence" value="ECO:0007669"/>
    <property type="project" value="InterPro"/>
</dbReference>
<dbReference type="GO" id="GO:0050821">
    <property type="term" value="P:protein stabilization"/>
    <property type="evidence" value="ECO:0000250"/>
    <property type="project" value="UniProtKB"/>
</dbReference>
<dbReference type="FunFam" id="2.10.250.10:FF:000002">
    <property type="entry name" value="Calreticulin"/>
    <property type="match status" value="1"/>
</dbReference>
<dbReference type="FunFam" id="2.60.120.200:FF:000122">
    <property type="entry name" value="Calreticulin 3"/>
    <property type="match status" value="1"/>
</dbReference>
<dbReference type="Gene3D" id="2.60.120.200">
    <property type="match status" value="1"/>
</dbReference>
<dbReference type="Gene3D" id="2.10.250.10">
    <property type="entry name" value="Calreticulin/calnexin, P domain"/>
    <property type="match status" value="1"/>
</dbReference>
<dbReference type="Gene3D" id="1.10.287.540">
    <property type="entry name" value="Helix hairpin bin"/>
    <property type="match status" value="1"/>
</dbReference>
<dbReference type="InterPro" id="IPR001580">
    <property type="entry name" value="Calret/calnex"/>
</dbReference>
<dbReference type="InterPro" id="IPR018124">
    <property type="entry name" value="Calret/calnex_CS"/>
</dbReference>
<dbReference type="InterPro" id="IPR009169">
    <property type="entry name" value="Calreticulin"/>
</dbReference>
<dbReference type="InterPro" id="IPR009033">
    <property type="entry name" value="Calreticulin/calnexin_P_dom_sf"/>
</dbReference>
<dbReference type="InterPro" id="IPR013320">
    <property type="entry name" value="ConA-like_dom_sf"/>
</dbReference>
<dbReference type="PANTHER" id="PTHR11073:SF16">
    <property type="entry name" value="CALRETICULIN"/>
    <property type="match status" value="1"/>
</dbReference>
<dbReference type="PANTHER" id="PTHR11073">
    <property type="entry name" value="CALRETICULIN AND CALNEXIN"/>
    <property type="match status" value="1"/>
</dbReference>
<dbReference type="Pfam" id="PF00262">
    <property type="entry name" value="Calreticulin"/>
    <property type="match status" value="2"/>
</dbReference>
<dbReference type="PIRSF" id="PIRSF002356">
    <property type="entry name" value="Calreticulin"/>
    <property type="match status" value="1"/>
</dbReference>
<dbReference type="PRINTS" id="PR00626">
    <property type="entry name" value="CALRETICULIN"/>
</dbReference>
<dbReference type="SUPFAM" id="SSF49899">
    <property type="entry name" value="Concanavalin A-like lectins/glucanases"/>
    <property type="match status" value="1"/>
</dbReference>
<dbReference type="SUPFAM" id="SSF63887">
    <property type="entry name" value="P-domain of calnexin/calreticulin"/>
    <property type="match status" value="1"/>
</dbReference>
<dbReference type="PROSITE" id="PS00803">
    <property type="entry name" value="CALRETICULIN_1"/>
    <property type="match status" value="1"/>
</dbReference>
<dbReference type="PROSITE" id="PS00804">
    <property type="entry name" value="CALRETICULIN_2"/>
    <property type="match status" value="1"/>
</dbReference>
<dbReference type="PROSITE" id="PS00805">
    <property type="entry name" value="CALRETICULIN_REPEAT"/>
    <property type="match status" value="3"/>
</dbReference>
<dbReference type="PROSITE" id="PS00014">
    <property type="entry name" value="ER_TARGET"/>
    <property type="match status" value="1"/>
</dbReference>
<name>CALR_CRIGR</name>
<accession>Q8K3H7</accession>
<organism>
    <name type="scientific">Cricetulus griseus</name>
    <name type="common">Chinese hamster</name>
    <name type="synonym">Cricetulus barabensis griseus</name>
    <dbReference type="NCBI Taxonomy" id="10029"/>
    <lineage>
        <taxon>Eukaryota</taxon>
        <taxon>Metazoa</taxon>
        <taxon>Chordata</taxon>
        <taxon>Craniata</taxon>
        <taxon>Vertebrata</taxon>
        <taxon>Euteleostomi</taxon>
        <taxon>Mammalia</taxon>
        <taxon>Eutheria</taxon>
        <taxon>Euarchontoglires</taxon>
        <taxon>Glires</taxon>
        <taxon>Rodentia</taxon>
        <taxon>Myomorpha</taxon>
        <taxon>Muroidea</taxon>
        <taxon>Cricetidae</taxon>
        <taxon>Cricetinae</taxon>
        <taxon>Cricetulus</taxon>
    </lineage>
</organism>
<proteinExistence type="evidence at protein level"/>
<evidence type="ECO:0000250" key="1"/>
<evidence type="ECO:0000250" key="2">
    <source>
        <dbReference type="UniProtKB" id="P14211"/>
    </source>
</evidence>
<evidence type="ECO:0000250" key="3">
    <source>
        <dbReference type="UniProtKB" id="P18418"/>
    </source>
</evidence>
<evidence type="ECO:0000250" key="4">
    <source>
        <dbReference type="UniProtKB" id="P27797"/>
    </source>
</evidence>
<evidence type="ECO:0000250" key="5">
    <source>
        <dbReference type="UniProtKB" id="P28491"/>
    </source>
</evidence>
<evidence type="ECO:0000255" key="6">
    <source>
        <dbReference type="PROSITE-ProRule" id="PRU10138"/>
    </source>
</evidence>
<evidence type="ECO:0000256" key="7">
    <source>
        <dbReference type="SAM" id="MobiDB-lite"/>
    </source>
</evidence>
<evidence type="ECO:0000269" key="8">
    <source>
    </source>
</evidence>
<evidence type="ECO:0000303" key="9">
    <source>
    </source>
</evidence>
<evidence type="ECO:0000305" key="10"/>
<reference key="1">
    <citation type="submission" date="2002-04" db="EMBL/GenBank/DDBJ databases">
        <authorList>
            <person name="Chung J.Y."/>
            <person name="Lee G.M."/>
        </authorList>
    </citation>
    <scope>NUCLEOTIDE SEQUENCE [MRNA]</scope>
</reference>
<reference key="2">
    <citation type="journal article" date="2001" name="Mol. Reprod. Dev.">
        <title>Exocytosis of a 60 kDa protein (calreticulin) from activated hamster oocytes.</title>
        <authorList>
            <person name="Munoz-Gotera R.J."/>
            <person name="Hernandez-Gonzalez E.O."/>
            <person name="Mendoza-Hernandez G."/>
            <person name="Contreras R.G."/>
            <person name="Mujica A."/>
        </authorList>
    </citation>
    <scope>SUBCELLULAR LOCATION</scope>
    <scope>FUNCTION</scope>
</reference>
<comment type="function">
    <text evidence="4 5 8">Calcium-binding chaperone that promotes folding, oligomeric assembly and quality control in the endoplasmic reticulum (ER) via the calreticulin/calnexin cycle. This lectin interacts transiently with almost all of the monoglucosylated glycoproteins that are synthesized in the ER. Interacts with the DNA-binding domain of NR3C1 and mediates its nuclear export. Involved in maternal gene expression regulation. May participate in oocyte maturation via the regulation of calcium homeostasis (By similarity). Present in the cortical granules of non-activated oocytes, is exocytosed during the cortical reaction in response to oocyte activation and might participate in the block to polyspermy (PubMed:11599052).</text>
</comment>
<comment type="subunit">
    <text evidence="2 3 4">Monomer. Component of an EIF2 complex at least composed of CELF1/CUGBP1, CALR, CALR3, EIF2S1, EIF2S2, HSP90B1 and HSPA5. Interacts with PDIA3/ERp57 and SPACA9 (By similarity). Interacts with TRIM21. Interacts with NR3C1. Interacts with PPIB. Interacts (via P-domain) with PDIA5. Interacts with GABARAP. Interacts with CLCC1.</text>
</comment>
<comment type="interaction">
    <interactant intactId="EBI-9005068">
        <id>Q8K3H7</id>
    </interactant>
    <interactant intactId="EBI-3894543">
        <id>PRO_0000000091</id>
        <label>APP</label>
        <dbReference type="UniProtKB" id="P05067"/>
    </interactant>
    <organismsDiffer>true</organismsDiffer>
    <experiments>2</experiments>
</comment>
<comment type="subcellular location">
    <subcellularLocation>
        <location evidence="4">Endoplasmic reticulum lumen</location>
    </subcellularLocation>
    <subcellularLocation>
        <location evidence="4">Cytoplasm</location>
        <location evidence="4">Cytosol</location>
    </subcellularLocation>
    <subcellularLocation>
        <location evidence="4">Cytolytic granule</location>
    </subcellularLocation>
    <subcellularLocation>
        <location evidence="4">Secreted</location>
        <location evidence="4">Extracellular space</location>
        <location evidence="4">Extracellular matrix</location>
    </subcellularLocation>
    <subcellularLocation>
        <location evidence="4">Cell surface</location>
    </subcellularLocation>
    <subcellularLocation>
        <location evidence="5">Sarcoplasmic reticulum lumen</location>
    </subcellularLocation>
    <subcellularLocation>
        <location evidence="8">Cytoplasmic vesicle</location>
        <location evidence="8">Secretory vesicle</location>
        <location evidence="8">Cortical granule</location>
    </subcellularLocation>
    <text evidence="4 5 8">Also found in cell surface (T cells), cytosol and extracellular matrix. During oocyte maturation and after parthenogenetic activation accumulates in cortical granules. In pronuclear and early cleaved embryos localizes weakly to cytoplasm around nucleus and more strongly in the region near the cortex (By similarity). In cortical granules of non-activated oocytes, is exocytosed during the cortical reaction in response to oocyte activation (PubMed:11599052).</text>
</comment>
<comment type="domain">
    <text evidence="1">Can be divided into a N-terminal globular domain, a proline-rich P-domain forming an elongated arm-like structure and a C-terminal acidic domain. The P-domain binds one molecule of calcium with high affinity, whereas the acidic C-domain binds multiple calcium ions with low affinity (By similarity).</text>
</comment>
<comment type="domain">
    <text evidence="1">The interaction with glycans occurs through a binding site in the globular lectin domain.</text>
</comment>
<comment type="domain">
    <text evidence="1">The zinc binding sites are localized to the N-domain.</text>
</comment>
<comment type="domain">
    <text evidence="1">Associates with PDIA3 through the tip of the extended arm formed by the P-domain.</text>
</comment>
<comment type="similarity">
    <text evidence="10">Belongs to the calreticulin family.</text>
</comment>
<gene>
    <name type="primary">CALR</name>
    <name evidence="9" type="synonym">CRT</name>
</gene>
<keyword id="KW-0007">Acetylation</keyword>
<keyword id="KW-0106">Calcium</keyword>
<keyword id="KW-0143">Chaperone</keyword>
<keyword id="KW-0963">Cytoplasm</keyword>
<keyword id="KW-0968">Cytoplasmic vesicle</keyword>
<keyword id="KW-1015">Disulfide bond</keyword>
<keyword id="KW-0256">Endoplasmic reticulum</keyword>
<keyword id="KW-0272">Extracellular matrix</keyword>
<keyword id="KW-0379">Hydroxylation</keyword>
<keyword id="KW-0430">Lectin</keyword>
<keyword id="KW-0458">Lysosome</keyword>
<keyword id="KW-0479">Metal-binding</keyword>
<keyword id="KW-0677">Repeat</keyword>
<keyword id="KW-0703">Sarcoplasmic reticulum</keyword>
<keyword id="KW-0964">Secreted</keyword>
<keyword id="KW-0732">Signal</keyword>
<keyword id="KW-0862">Zinc</keyword>
<sequence length="417" mass="48243">MLLSVPLLLGLLGLAAAEPAVYFKEQFLDGDDWTNRWVESKHKSDFGKFVLSSGKFYGDQEKDKGLQTSQDARFYALSARFEPFSNKGQTLVVQFTVKHEQNIDCGGGYVKLFPGSLDQKDMHGDSEYNIMFGPDICGPGTKKVHVIFNYKGKNVLINKDIRCKDDEFTHLYTLIVRPDNTYEVKIDNSQVESGSLEDDWDFLPPKKIKDPDAAKPEDWDERAKIDDPTDSKPEDWDKPEHIPDPDAKKPEDWDEEMDGEWEPPVIQNPEYKGEWKPRQIDNPDYKGTWIHPEIDNPEYSPDANIYAYDSFAVLGLDLWQVKSGTIFDNFLITNDEAYAEEFGNETWGVTKASEKQMKDKQDEEQRLKEEEEDKKRKEEEEAEDKEDEDDRDEDEEDEDEKEEDEEDTTPGQTKDEL</sequence>
<protein>
    <recommendedName>
        <fullName>Calreticulin</fullName>
    </recommendedName>
    <alternativeName>
        <fullName>CRP55</fullName>
    </alternativeName>
    <alternativeName>
        <fullName>Calregulin</fullName>
    </alternativeName>
    <alternativeName>
        <fullName>Endoplasmic reticulum resident protein 60</fullName>
        <shortName>ERp60</shortName>
    </alternativeName>
    <alternativeName>
        <fullName>HACBP</fullName>
    </alternativeName>
</protein>
<feature type="signal peptide" evidence="1">
    <location>
        <begin position="1"/>
        <end position="17"/>
    </location>
</feature>
<feature type="chain" id="PRO_0000004172" description="Calreticulin">
    <location>
        <begin position="18"/>
        <end position="417"/>
    </location>
</feature>
<feature type="repeat" description="1-1">
    <location>
        <begin position="191"/>
        <end position="202"/>
    </location>
</feature>
<feature type="repeat" description="1-2">
    <location>
        <begin position="210"/>
        <end position="221"/>
    </location>
</feature>
<feature type="repeat" description="1-3">
    <location>
        <begin position="227"/>
        <end position="238"/>
    </location>
</feature>
<feature type="repeat" description="1-4">
    <location>
        <begin position="244"/>
        <end position="255"/>
    </location>
</feature>
<feature type="repeat" description="2-1">
    <location>
        <begin position="259"/>
        <end position="269"/>
    </location>
</feature>
<feature type="repeat" description="2-2">
    <location>
        <begin position="273"/>
        <end position="283"/>
    </location>
</feature>
<feature type="repeat" description="2-3">
    <location>
        <begin position="287"/>
        <end position="297"/>
    </location>
</feature>
<feature type="region of interest" description="N-domain">
    <location>
        <begin position="18"/>
        <end position="197"/>
    </location>
</feature>
<feature type="region of interest" description="4 X approximate repeats">
    <location>
        <begin position="191"/>
        <end position="255"/>
    </location>
</feature>
<feature type="region of interest" description="Disordered" evidence="7">
    <location>
        <begin position="193"/>
        <end position="277"/>
    </location>
</feature>
<feature type="region of interest" description="P-domain">
    <location>
        <begin position="198"/>
        <end position="308"/>
    </location>
</feature>
<feature type="region of interest" description="Interaction with PPIB" evidence="1">
    <location>
        <begin position="237"/>
        <end position="270"/>
    </location>
</feature>
<feature type="region of interest" description="3 X approximate repeats">
    <location>
        <begin position="259"/>
        <end position="297"/>
    </location>
</feature>
<feature type="region of interest" description="C-domain">
    <location>
        <begin position="309"/>
        <end position="417"/>
    </location>
</feature>
<feature type="region of interest" description="Disordered" evidence="7">
    <location>
        <begin position="350"/>
        <end position="417"/>
    </location>
</feature>
<feature type="short sequence motif" description="Prevents secretion from ER" evidence="6">
    <location>
        <begin position="414"/>
        <end position="417"/>
    </location>
</feature>
<feature type="compositionally biased region" description="Basic and acidic residues" evidence="7">
    <location>
        <begin position="207"/>
        <end position="251"/>
    </location>
</feature>
<feature type="compositionally biased region" description="Acidic residues" evidence="7">
    <location>
        <begin position="252"/>
        <end position="261"/>
    </location>
</feature>
<feature type="compositionally biased region" description="Basic and acidic residues" evidence="7">
    <location>
        <begin position="352"/>
        <end position="379"/>
    </location>
</feature>
<feature type="compositionally biased region" description="Acidic residues" evidence="7">
    <location>
        <begin position="380"/>
        <end position="408"/>
    </location>
</feature>
<feature type="binding site" evidence="1">
    <location>
        <position position="26"/>
    </location>
    <ligand>
        <name>Ca(2+)</name>
        <dbReference type="ChEBI" id="CHEBI:29108"/>
    </ligand>
</feature>
<feature type="binding site" evidence="1">
    <location>
        <position position="62"/>
    </location>
    <ligand>
        <name>Ca(2+)</name>
        <dbReference type="ChEBI" id="CHEBI:29108"/>
    </ligand>
</feature>
<feature type="binding site" evidence="1">
    <location>
        <position position="64"/>
    </location>
    <ligand>
        <name>Ca(2+)</name>
        <dbReference type="ChEBI" id="CHEBI:29108"/>
    </ligand>
</feature>
<feature type="binding site" evidence="2">
    <location>
        <position position="109"/>
    </location>
    <ligand>
        <name>an alpha-D-glucoside</name>
        <dbReference type="ChEBI" id="CHEBI:22390"/>
    </ligand>
</feature>
<feature type="binding site" evidence="2">
    <location>
        <position position="111"/>
    </location>
    <ligand>
        <name>an alpha-D-glucoside</name>
        <dbReference type="ChEBI" id="CHEBI:22390"/>
    </ligand>
</feature>
<feature type="binding site" evidence="2">
    <location>
        <position position="128"/>
    </location>
    <ligand>
        <name>an alpha-D-glucoside</name>
        <dbReference type="ChEBI" id="CHEBI:22390"/>
    </ligand>
</feature>
<feature type="binding site" evidence="2">
    <location>
        <position position="135"/>
    </location>
    <ligand>
        <name>an alpha-D-glucoside</name>
        <dbReference type="ChEBI" id="CHEBI:22390"/>
    </ligand>
</feature>
<feature type="binding site" evidence="2">
    <location>
        <position position="317"/>
    </location>
    <ligand>
        <name>an alpha-D-glucoside</name>
        <dbReference type="ChEBI" id="CHEBI:22390"/>
    </ligand>
</feature>
<feature type="binding site" evidence="1">
    <location>
        <position position="328"/>
    </location>
    <ligand>
        <name>Ca(2+)</name>
        <dbReference type="ChEBI" id="CHEBI:29108"/>
    </ligand>
</feature>
<feature type="modified residue" description="N6-acetyllysine" evidence="4">
    <location>
        <position position="48"/>
    </location>
</feature>
<feature type="modified residue" description="N6-(2-hydroxyisobutyryl)lysine" evidence="4">
    <location>
        <position position="64"/>
    </location>
</feature>
<feature type="modified residue" description="N6-acetyllysine" evidence="4">
    <location>
        <position position="159"/>
    </location>
</feature>
<feature type="modified residue" description="N6-acetyllysine" evidence="4">
    <location>
        <position position="209"/>
    </location>
</feature>
<feature type="disulfide bond" evidence="1">
    <location>
        <begin position="105"/>
        <end position="137"/>
    </location>
</feature>